<name>CXA10_MOUSE</name>
<comment type="function">
    <text evidence="5 6 7 8">One gap junction consists of a cluster of closely packed pairs of transmembrane channels, the connexons, through which materials of low MW diffuse from one cell to a neighboring cell. Involved in tracer coupling between horizontal cells of the retina. May play a role in the regulation of horizontal cell patterning.</text>
</comment>
<comment type="subunit">
    <text evidence="1">A connexon is composed of a hexamer of connexins.</text>
</comment>
<comment type="subcellular location">
    <subcellularLocation>
        <location evidence="7">Cell membrane</location>
        <topology evidence="7">Multi-pass membrane protein</topology>
    </subcellularLocation>
    <subcellularLocation>
        <location evidence="7">Cell junction</location>
        <location evidence="7">Gap junction</location>
    </subcellularLocation>
</comment>
<comment type="alternative products">
    <event type="alternative splicing"/>
    <isoform>
        <id>Q9WUS4-1</id>
        <name>1</name>
        <sequence type="displayed"/>
    </isoform>
    <isoform>
        <id>Q9WUS4-2</id>
        <name>2</name>
        <sequence type="described" ref="VSP_035809"/>
    </isoform>
</comment>
<comment type="tissue specificity">
    <text evidence="4 5 7">Low levels were detected in skin, heart, kidney, testis, ovary, intestine. Expression not detected in brain, sciatic nerve or liver. According to PubMed:15147297 expression is detected only in horizontal cells in the inner nuclear layer of the retina and not in other neurons of the central nervous system or tissues. Detected in the outer plexiform layer of the retina (at protein level).</text>
</comment>
<comment type="developmental stage">
    <text evidence="5">Expressed in the retina from 16.5 dpc to P1, in the thymus from 18.5 dpc to P1, and in kidney from 16.5 dpc to 18.5 dpc.</text>
</comment>
<comment type="disruption phenotype">
    <text evidence="5 6 8">Mice are fertile and show no obvious anatomical or behavioral abnormalities. In horizontal cells of the retina tracer coupling is abolished but the spatial tuning of ganglion cells is unchanged.</text>
</comment>
<comment type="similarity">
    <text evidence="10">Belongs to the connexin family. Alpha-type (group II) subfamily.</text>
</comment>
<gene>
    <name type="primary">Gja10</name>
</gene>
<proteinExistence type="evidence at protein level"/>
<reference key="1">
    <citation type="journal article" date="1999" name="J. Biol. Chem.">
        <title>Molecular cloning and functional expression of the mouse gap junction gene connexin-57 in human HeLa cells.</title>
        <authorList>
            <person name="Manthey D."/>
            <person name="Bukauskas F."/>
            <person name="Kozak C."/>
            <person name="Willecke K."/>
            <person name="Lee C.G."/>
        </authorList>
    </citation>
    <scope>NUCLEOTIDE SEQUENCE [GENOMIC DNA]</scope>
</reference>
<reference key="2">
    <citation type="journal article" date="2009" name="PLoS Biol.">
        <title>Lineage-specific biology revealed by a finished genome assembly of the mouse.</title>
        <authorList>
            <person name="Church D.M."/>
            <person name="Goodstadt L."/>
            <person name="Hillier L.W."/>
            <person name="Zody M.C."/>
            <person name="Goldstein S."/>
            <person name="She X."/>
            <person name="Bult C.J."/>
            <person name="Agarwala R."/>
            <person name="Cherry J.L."/>
            <person name="DiCuccio M."/>
            <person name="Hlavina W."/>
            <person name="Kapustin Y."/>
            <person name="Meric P."/>
            <person name="Maglott D."/>
            <person name="Birtle Z."/>
            <person name="Marques A.C."/>
            <person name="Graves T."/>
            <person name="Zhou S."/>
            <person name="Teague B."/>
            <person name="Potamousis K."/>
            <person name="Churas C."/>
            <person name="Place M."/>
            <person name="Herschleb J."/>
            <person name="Runnheim R."/>
            <person name="Forrest D."/>
            <person name="Amos-Landgraf J."/>
            <person name="Schwartz D.C."/>
            <person name="Cheng Z."/>
            <person name="Lindblad-Toh K."/>
            <person name="Eichler E.E."/>
            <person name="Ponting C.P."/>
        </authorList>
    </citation>
    <scope>NUCLEOTIDE SEQUENCE [LARGE SCALE GENOMIC DNA]</scope>
    <source>
        <strain>C57BL/6J</strain>
    </source>
</reference>
<reference key="3">
    <citation type="journal article" date="2004" name="Eur. J. Neurosci.">
        <title>Functional expression of connexin57 in horizontal cells of the mouse retina.</title>
        <authorList>
            <person name="Hombach S."/>
            <person name="Janssen-Bienhold U."/>
            <person name="Soehl G."/>
            <person name="Schubert T."/>
            <person name="Buessow H."/>
            <person name="Ott T."/>
            <person name="Weiler R."/>
            <person name="Willecke K."/>
        </authorList>
    </citation>
    <scope>NUCLEOTIDE SEQUENCE [MRNA] OF 478-505 (ISOFORM 2)</scope>
    <scope>FUNCTION</scope>
    <scope>TISSUE SPECIFICITY</scope>
    <scope>DEVELOPMENTAL STAGE</scope>
    <scope>DISRUPTION PHENOTYPE</scope>
</reference>
<reference key="4">
    <citation type="journal article" date="2003" name="Cell Commun. Adhes.">
        <title>Expression profiles of the novel human connexin genes hCx30.2, hCx40.1, and hCx62 differ from their putative mouse orthologues.</title>
        <authorList>
            <person name="Soehl G."/>
            <person name="Nielsen P.A."/>
            <person name="Eiberger J."/>
            <person name="Willecke K."/>
        </authorList>
    </citation>
    <scope>TISSUE SPECIFICITY</scope>
</reference>
<reference key="5">
    <citation type="journal article" date="2006" name="Eur. J. Neurosci.">
        <title>Horizontal cell receptive fields are reduced in connexin57-deficient mice.</title>
        <authorList>
            <person name="Shelley J."/>
            <person name="Dedek K."/>
            <person name="Schubert T."/>
            <person name="Feigenspan A."/>
            <person name="Schultz K."/>
            <person name="Hombach S."/>
            <person name="Willecke K."/>
            <person name="Weiler R."/>
        </authorList>
    </citation>
    <scope>FUNCTION</scope>
    <scope>DISRUPTION PHENOTYPE</scope>
</reference>
<reference key="6">
    <citation type="journal article" date="2007" name="Neuroscience">
        <title>Spatial relationships of connexin36, connexin57 and zonula occludens-1 in the outer plexiform layer of mouse retina.</title>
        <authorList>
            <person name="Ciolofan C."/>
            <person name="Lynn B.D."/>
            <person name="Wellershaus K."/>
            <person name="Willecke K."/>
            <person name="Nagy J.I."/>
        </authorList>
    </citation>
    <scope>FUNCTION</scope>
    <scope>SUBCELLULAR LOCATION</scope>
    <scope>TISSUE SPECIFICITY</scope>
</reference>
<reference key="7">
    <citation type="journal article" date="2008" name="PLoS ONE">
        <title>Ganglion cell adaptability: does the coupling of horizontal cells play a role?</title>
        <authorList>
            <person name="Dedek K."/>
            <person name="Pandarinath C."/>
            <person name="Alam N.M."/>
            <person name="Wellershaus K."/>
            <person name="Schubert T."/>
            <person name="Willecke K."/>
            <person name="Prusky G.T."/>
            <person name="Weiler R."/>
            <person name="Nirenberg S."/>
        </authorList>
    </citation>
    <scope>FUNCTION</scope>
    <scope>DISRUPTION PHENOTYPE</scope>
</reference>
<accession>Q9WUS4</accession>
<accession>A2ANV0</accession>
<keyword id="KW-0025">Alternative splicing</keyword>
<keyword id="KW-0965">Cell junction</keyword>
<keyword id="KW-1003">Cell membrane</keyword>
<keyword id="KW-0303">Gap junction</keyword>
<keyword id="KW-0472">Membrane</keyword>
<keyword id="KW-1185">Reference proteome</keyword>
<keyword id="KW-0812">Transmembrane</keyword>
<keyword id="KW-1133">Transmembrane helix</keyword>
<sequence>MGDWNLLGGILEEVHSHSTIVGKIWLTILFIFRMLVLGVAAEDVWDDEQSAFACNTQQPGCNNICYDDAFPISLIRFWVLQIIFVSSPSLVYMGHALYRLRDFEKQRQKKKLYLRAQMENPELDLEEQQRVDKELRRLEEQKRIHKVPLKGCLLRTYVLHILTRSVLEVGFMIGQYILYGFQMHPIYKCTQAPCPNSVDCFVSRPTEKTIFMLFMHSIAAISLLLNILEIFHLGIRKIMRALDGKSSSGNTENETGPPFHSTNYSGTQQCMICSSLPERISLLQANNKQQVIRVNIPRSKSMWQIPHPRQLEVDVSCGKRDWAEKIESCAQLHVHSPCPHDRSARIQHPGQQPCHSVFGPKNAMSQSWFGTMTASQHRPSSALETWERSQGPEASGRSLTDRQSHFQGSDGSARESGVWTDRLGPGSRKASFLSRLMSEKGQRHSDSGSSRSLNSSCLDFSHGENSPSPLPSATGHRASMVSKSSHVDSPPHSSFIIHETYVYVY</sequence>
<feature type="chain" id="PRO_0000057841" description="Gap junction alpha-10 protein">
    <location>
        <begin position="1"/>
        <end position="505"/>
    </location>
</feature>
<feature type="topological domain" description="Cytoplasmic" evidence="2">
    <location>
        <begin position="1"/>
        <end position="16"/>
    </location>
</feature>
<feature type="transmembrane region" description="Helical" evidence="2">
    <location>
        <begin position="17"/>
        <end position="37"/>
    </location>
</feature>
<feature type="topological domain" description="Extracellular" evidence="2">
    <location>
        <begin position="38"/>
        <end position="76"/>
    </location>
</feature>
<feature type="transmembrane region" description="Helical" evidence="2">
    <location>
        <begin position="77"/>
        <end position="97"/>
    </location>
</feature>
<feature type="topological domain" description="Cytoplasmic" evidence="2">
    <location>
        <begin position="98"/>
        <end position="165"/>
    </location>
</feature>
<feature type="transmembrane region" description="Helical" evidence="2">
    <location>
        <begin position="166"/>
        <end position="186"/>
    </location>
</feature>
<feature type="topological domain" description="Extracellular" evidence="2">
    <location>
        <begin position="187"/>
        <end position="209"/>
    </location>
</feature>
<feature type="transmembrane region" description="Helical" evidence="2">
    <location>
        <begin position="210"/>
        <end position="230"/>
    </location>
</feature>
<feature type="topological domain" description="Cytoplasmic" evidence="2">
    <location>
        <begin position="231"/>
        <end position="505"/>
    </location>
</feature>
<feature type="region of interest" description="Disordered" evidence="3">
    <location>
        <begin position="371"/>
        <end position="491"/>
    </location>
</feature>
<feature type="compositionally biased region" description="Polar residues" evidence="3">
    <location>
        <begin position="371"/>
        <end position="383"/>
    </location>
</feature>
<feature type="compositionally biased region" description="Basic and acidic residues" evidence="3">
    <location>
        <begin position="437"/>
        <end position="446"/>
    </location>
</feature>
<feature type="compositionally biased region" description="Low complexity" evidence="3">
    <location>
        <begin position="447"/>
        <end position="460"/>
    </location>
</feature>
<feature type="splice variant" id="VSP_035809" description="In isoform 2." evidence="9">
    <original>VSKSSHVDSPPHSSFIIHETYVYVY</original>
    <variation>NMLLELSSIMKK</variation>
    <location>
        <begin position="481"/>
        <end position="505"/>
    </location>
</feature>
<feature type="sequence conflict" description="In Ref. 1; CAB40358." evidence="10" ref="1">
    <original>R</original>
    <variation>K</variation>
    <location>
        <position position="143"/>
    </location>
</feature>
<feature type="sequence conflict" description="In Ref. 1; CAB40358." evidence="10" ref="1">
    <original>I</original>
    <variation>V</variation>
    <location>
        <position position="272"/>
    </location>
</feature>
<feature type="sequence conflict" description="In Ref. 1; CAB40358." evidence="10" ref="1">
    <original>A</original>
    <variation>T</variation>
    <location>
        <position position="330"/>
    </location>
</feature>
<evidence type="ECO:0000250" key="1"/>
<evidence type="ECO:0000255" key="2"/>
<evidence type="ECO:0000256" key="3">
    <source>
        <dbReference type="SAM" id="MobiDB-lite"/>
    </source>
</evidence>
<evidence type="ECO:0000269" key="4">
    <source>
    </source>
</evidence>
<evidence type="ECO:0000269" key="5">
    <source>
    </source>
</evidence>
<evidence type="ECO:0000269" key="6">
    <source>
    </source>
</evidence>
<evidence type="ECO:0000269" key="7">
    <source>
    </source>
</evidence>
<evidence type="ECO:0000269" key="8">
    <source>
    </source>
</evidence>
<evidence type="ECO:0000303" key="9">
    <source>
    </source>
</evidence>
<evidence type="ECO:0000305" key="10"/>
<organism>
    <name type="scientific">Mus musculus</name>
    <name type="common">Mouse</name>
    <dbReference type="NCBI Taxonomy" id="10090"/>
    <lineage>
        <taxon>Eukaryota</taxon>
        <taxon>Metazoa</taxon>
        <taxon>Chordata</taxon>
        <taxon>Craniata</taxon>
        <taxon>Vertebrata</taxon>
        <taxon>Euteleostomi</taxon>
        <taxon>Mammalia</taxon>
        <taxon>Eutheria</taxon>
        <taxon>Euarchontoglires</taxon>
        <taxon>Glires</taxon>
        <taxon>Rodentia</taxon>
        <taxon>Myomorpha</taxon>
        <taxon>Muroidea</taxon>
        <taxon>Muridae</taxon>
        <taxon>Murinae</taxon>
        <taxon>Mus</taxon>
        <taxon>Mus</taxon>
    </lineage>
</organism>
<dbReference type="EMBL" id="AJ010741">
    <property type="protein sequence ID" value="CAB40358.1"/>
    <property type="molecule type" value="Genomic_DNA"/>
</dbReference>
<dbReference type="EMBL" id="AL831746">
    <property type="status" value="NOT_ANNOTATED_CDS"/>
    <property type="molecule type" value="Genomic_DNA"/>
</dbReference>
<dbReference type="RefSeq" id="NP_001398782.1">
    <molecule id="Q9WUS4-2"/>
    <property type="nucleotide sequence ID" value="NM_001411853.1"/>
</dbReference>
<dbReference type="RefSeq" id="NP_034419.2">
    <property type="nucleotide sequence ID" value="NM_010289.2"/>
</dbReference>
<dbReference type="SMR" id="Q9WUS4"/>
<dbReference type="FunCoup" id="Q9WUS4">
    <property type="interactions" value="13"/>
</dbReference>
<dbReference type="STRING" id="10090.ENSMUSP00000061742"/>
<dbReference type="jPOST" id="Q9WUS4"/>
<dbReference type="PaxDb" id="10090-ENSMUSP00000061742"/>
<dbReference type="Antibodypedia" id="56329">
    <property type="antibodies" value="55 antibodies from 12 providers"/>
</dbReference>
<dbReference type="DNASU" id="14610"/>
<dbReference type="Ensembl" id="ENSMUST00000056517.3">
    <molecule id="Q9WUS4-1"/>
    <property type="protein sequence ID" value="ENSMUSP00000061742.3"/>
    <property type="gene ID" value="ENSMUSG00000051056.6"/>
</dbReference>
<dbReference type="Ensembl" id="ENSMUST00000219644.2">
    <molecule id="Q9WUS4-2"/>
    <property type="protein sequence ID" value="ENSMUSP00000151323.2"/>
    <property type="gene ID" value="ENSMUSG00000051056.6"/>
</dbReference>
<dbReference type="UCSC" id="uc008sev.1">
    <molecule id="Q9WUS4-1"/>
    <property type="organism name" value="mouse"/>
</dbReference>
<dbReference type="AGR" id="MGI:1339969"/>
<dbReference type="MGI" id="MGI:1339969">
    <property type="gene designation" value="Gja10"/>
</dbReference>
<dbReference type="VEuPathDB" id="HostDB:ENSMUSG00000051056"/>
<dbReference type="eggNOG" id="ENOG502QQPH">
    <property type="taxonomic scope" value="Eukaryota"/>
</dbReference>
<dbReference type="GeneTree" id="ENSGT01090000260070"/>
<dbReference type="HOGENOM" id="CLU_037388_1_0_1"/>
<dbReference type="InParanoid" id="Q9WUS4"/>
<dbReference type="OMA" id="SPCPWDD"/>
<dbReference type="OrthoDB" id="9939271at2759"/>
<dbReference type="PhylomeDB" id="Q9WUS4"/>
<dbReference type="TreeFam" id="TF329606"/>
<dbReference type="Reactome" id="R-MMU-112303">
    <property type="pathway name" value="Electric Transmission Across Gap Junctions"/>
</dbReference>
<dbReference type="Reactome" id="R-MMU-190861">
    <property type="pathway name" value="Gap junction assembly"/>
</dbReference>
<dbReference type="BioGRID-ORCS" id="14610">
    <property type="hits" value="2 hits in 76 CRISPR screens"/>
</dbReference>
<dbReference type="PRO" id="PR:Q9WUS4"/>
<dbReference type="Proteomes" id="UP000000589">
    <property type="component" value="Chromosome 4"/>
</dbReference>
<dbReference type="RNAct" id="Q9WUS4">
    <property type="molecule type" value="protein"/>
</dbReference>
<dbReference type="Bgee" id="ENSMUSG00000051056">
    <property type="expression patterns" value="Expressed in mesodermal cell in embryo and 14 other cell types or tissues"/>
</dbReference>
<dbReference type="ExpressionAtlas" id="Q9WUS4">
    <property type="expression patterns" value="baseline and differential"/>
</dbReference>
<dbReference type="GO" id="GO:0005922">
    <property type="term" value="C:connexin complex"/>
    <property type="evidence" value="ECO:0007669"/>
    <property type="project" value="InterPro"/>
</dbReference>
<dbReference type="GO" id="GO:0005921">
    <property type="term" value="C:gap junction"/>
    <property type="evidence" value="ECO:0000314"/>
    <property type="project" value="MGI"/>
</dbReference>
<dbReference type="GO" id="GO:0005243">
    <property type="term" value="F:gap junction channel activity"/>
    <property type="evidence" value="ECO:0000314"/>
    <property type="project" value="MGI"/>
</dbReference>
<dbReference type="GO" id="GO:0007154">
    <property type="term" value="P:cell communication"/>
    <property type="evidence" value="ECO:0007669"/>
    <property type="project" value="InterPro"/>
</dbReference>
<dbReference type="GO" id="GO:0050908">
    <property type="term" value="P:detection of light stimulus involved in visual perception"/>
    <property type="evidence" value="ECO:0000315"/>
    <property type="project" value="MGI"/>
</dbReference>
<dbReference type="GO" id="GO:0007276">
    <property type="term" value="P:gamete generation"/>
    <property type="evidence" value="ECO:0000314"/>
    <property type="project" value="MGI"/>
</dbReference>
<dbReference type="GO" id="GO:0009416">
    <property type="term" value="P:response to light stimulus"/>
    <property type="evidence" value="ECO:0000315"/>
    <property type="project" value="MGI"/>
</dbReference>
<dbReference type="GO" id="GO:0007416">
    <property type="term" value="P:synapse assembly"/>
    <property type="evidence" value="ECO:0000315"/>
    <property type="project" value="MGI"/>
</dbReference>
<dbReference type="FunFam" id="1.20.1440.80:FF:000001">
    <property type="entry name" value="Gap junction alpha-1"/>
    <property type="match status" value="1"/>
</dbReference>
<dbReference type="Gene3D" id="1.20.1440.80">
    <property type="entry name" value="Gap junction channel protein cysteine-rich domain"/>
    <property type="match status" value="1"/>
</dbReference>
<dbReference type="InterPro" id="IPR000500">
    <property type="entry name" value="Connexin"/>
</dbReference>
<dbReference type="InterPro" id="IPR019570">
    <property type="entry name" value="Connexin_CCC"/>
</dbReference>
<dbReference type="InterPro" id="IPR017990">
    <property type="entry name" value="Connexin_CS"/>
</dbReference>
<dbReference type="InterPro" id="IPR013092">
    <property type="entry name" value="Connexin_N"/>
</dbReference>
<dbReference type="InterPro" id="IPR038359">
    <property type="entry name" value="Connexin_N_sf"/>
</dbReference>
<dbReference type="PANTHER" id="PTHR11984">
    <property type="entry name" value="CONNEXIN"/>
    <property type="match status" value="1"/>
</dbReference>
<dbReference type="PANTHER" id="PTHR11984:SF9">
    <property type="entry name" value="GAP JUNCTION ALPHA-10 PROTEIN"/>
    <property type="match status" value="1"/>
</dbReference>
<dbReference type="Pfam" id="PF00029">
    <property type="entry name" value="Connexin"/>
    <property type="match status" value="1"/>
</dbReference>
<dbReference type="PRINTS" id="PR00206">
    <property type="entry name" value="CONNEXIN"/>
</dbReference>
<dbReference type="SMART" id="SM00037">
    <property type="entry name" value="CNX"/>
    <property type="match status" value="1"/>
</dbReference>
<dbReference type="SMART" id="SM01089">
    <property type="entry name" value="Connexin_CCC"/>
    <property type="match status" value="1"/>
</dbReference>
<dbReference type="PROSITE" id="PS00407">
    <property type="entry name" value="CONNEXINS_1"/>
    <property type="match status" value="1"/>
</dbReference>
<dbReference type="PROSITE" id="PS00408">
    <property type="entry name" value="CONNEXINS_2"/>
    <property type="match status" value="1"/>
</dbReference>
<protein>
    <recommendedName>
        <fullName>Gap junction alpha-10 protein</fullName>
    </recommendedName>
    <alternativeName>
        <fullName>Connexin-57</fullName>
        <shortName>Cx57</shortName>
    </alternativeName>
</protein>